<sequence>MTSTLPFVSVIIPVYNEAENIQKCLNAVTSQTYPKSKYEVLVVDNGSQDGTKEIARQFSTAYDNLEILIEDEQQGSYAARNTGIEQSSGAILAFLDGDCSPHQQWLERGVSTISGTGVDLVGGNVEFTYPNGGTAAERYDSFTNMQMKESISKRNVAKTVNLFVRQDVVEDVGPFPNHLISGGDVHWTKRATDAGYSLTFAHDVIGCHPARPFGELLKKQFRVGKGQIQVWMLDRISLRRVFALALWILVGFLPKPPHYLSQDLRRTGQTVTKAMFVRILVVAWCCRLAENAGRLSYILRSEEQ</sequence>
<name>AGLE_HALVD</name>
<reference key="1">
    <citation type="journal article" date="2008" name="J. Bacteriol.">
        <title>Identification of AglE, a second glycosyltransferase involved in N glycosylation of the Haloferax volcanii S-layer glycoprotein.</title>
        <authorList>
            <person name="Abu-Qarn M."/>
            <person name="Giordano A."/>
            <person name="Battaglia F."/>
            <person name="Trauner A."/>
            <person name="Hitchen P.G."/>
            <person name="Morris H.R."/>
            <person name="Dell A."/>
            <person name="Eichler J."/>
        </authorList>
    </citation>
    <scope>NUCLEOTIDE SEQUENCE [GENOMIC DNA]</scope>
    <scope>FUNCTION IN GLYCOSYLATION</scope>
    <scope>PATHWAY</scope>
    <scope>SUBCELLULAR LOCATION</scope>
    <scope>DISRUPTION PHENOTYPE</scope>
    <scope>GENE NAME</scope>
    <source>
        <strain>DS2 / DS70</strain>
    </source>
</reference>
<reference key="2">
    <citation type="journal article" date="2010" name="PLoS ONE">
        <title>The complete genome sequence of Haloferax volcanii DS2, a model archaeon.</title>
        <authorList>
            <person name="Hartman A.L."/>
            <person name="Norais C."/>
            <person name="Badger J.H."/>
            <person name="Delmas S."/>
            <person name="Haldenby S."/>
            <person name="Madupu R."/>
            <person name="Robinson J."/>
            <person name="Khouri H."/>
            <person name="Ren Q."/>
            <person name="Lowe T.M."/>
            <person name="Maupin-Furlow J."/>
            <person name="Pohlschroder M."/>
            <person name="Daniels C."/>
            <person name="Pfeiffer F."/>
            <person name="Allers T."/>
            <person name="Eisen J.A."/>
        </authorList>
    </citation>
    <scope>NUCLEOTIDE SEQUENCE [LARGE SCALE GENOMIC DNA]</scope>
    <source>
        <strain>ATCC 29605 / DSM 3757 / JCM 8879 / NBRC 14742 / NCIMB 2012 / VKM B-1768 / DS2</strain>
    </source>
</reference>
<reference key="3">
    <citation type="journal article" date="2010" name="Mol. Microbiol.">
        <title>Distinct glycan-charged phosphodolichol carriers are required for the assembly of the pentasaccharide N-linked to the Haloferax volcanii S-layer glycoprotein.</title>
        <authorList>
            <person name="Guan Z."/>
            <person name="Naparstek S."/>
            <person name="Kaminski L."/>
            <person name="Konrad Z."/>
            <person name="Eichler J."/>
        </authorList>
    </citation>
    <scope>FUNCTION</scope>
    <scope>DISRUPTION PHENOTYPE</scope>
    <source>
        <strain>H53</strain>
    </source>
</reference>
<reference key="4">
    <citation type="journal article" date="2012" name="J. Bacteriol.">
        <title>N-glycosylation of Haloferax volcanii flagellins requires known Agl proteins and is essential for biosynthesis of stable flagella.</title>
        <authorList>
            <person name="Tripepi M."/>
            <person name="You J."/>
            <person name="Temel S."/>
            <person name="Onder O."/>
            <person name="Brisson D."/>
            <person name="Pohlschroder M."/>
        </authorList>
    </citation>
    <scope>FUNCTION IN GLYCOSYLATION OF FLAGELLINS</scope>
    <scope>DISRUPTION PHENOTYPE</scope>
    <source>
        <strain>H53</strain>
    </source>
</reference>
<protein>
    <recommendedName>
        <fullName>Glycosyltransferase AglE</fullName>
        <ecNumber>2.4.1.-</ecNumber>
    </recommendedName>
    <alternativeName>
        <fullName>Archaeal glycosylation protein E</fullName>
    </alternativeName>
</protein>
<dbReference type="EC" id="2.4.1.-"/>
<dbReference type="EMBL" id="AM888352">
    <property type="protein sequence ID" value="CAP09656.1"/>
    <property type="molecule type" value="Genomic_DNA"/>
</dbReference>
<dbReference type="EMBL" id="CP001956">
    <property type="protein sequence ID" value="ADE02271.1"/>
    <property type="molecule type" value="Genomic_DNA"/>
</dbReference>
<dbReference type="RefSeq" id="WP_004041401.1">
    <property type="nucleotide sequence ID" value="NC_013967.1"/>
</dbReference>
<dbReference type="SMR" id="D4GYG7"/>
<dbReference type="STRING" id="309800.HVO_1523A"/>
<dbReference type="CAZy" id="GT2">
    <property type="family name" value="Glycosyltransferase Family 2"/>
</dbReference>
<dbReference type="PaxDb" id="309800-C498_02970"/>
<dbReference type="EnsemblBacteria" id="ADE02271">
    <property type="protein sequence ID" value="ADE02271"/>
    <property type="gene ID" value="HVO_1523A"/>
</dbReference>
<dbReference type="GeneID" id="31787474"/>
<dbReference type="KEGG" id="hvo:HVO_1523A"/>
<dbReference type="eggNOG" id="arCOG01385">
    <property type="taxonomic scope" value="Archaea"/>
</dbReference>
<dbReference type="HOGENOM" id="CLU_025996_19_6_2"/>
<dbReference type="OrthoDB" id="46222at2157"/>
<dbReference type="BioCyc" id="MetaCyc:MONOMER-19286"/>
<dbReference type="UniPathway" id="UPA00977"/>
<dbReference type="Proteomes" id="UP000008243">
    <property type="component" value="Chromosome"/>
</dbReference>
<dbReference type="GO" id="GO:0005886">
    <property type="term" value="C:plasma membrane"/>
    <property type="evidence" value="ECO:0007669"/>
    <property type="project" value="UniProtKB-SubCell"/>
</dbReference>
<dbReference type="GO" id="GO:0016757">
    <property type="term" value="F:glycosyltransferase activity"/>
    <property type="evidence" value="ECO:0007669"/>
    <property type="project" value="UniProtKB-KW"/>
</dbReference>
<dbReference type="GO" id="GO:0045232">
    <property type="term" value="P:S-layer organization"/>
    <property type="evidence" value="ECO:0007669"/>
    <property type="project" value="UniProtKB-UniPathway"/>
</dbReference>
<dbReference type="Gene3D" id="3.90.550.10">
    <property type="entry name" value="Spore Coat Polysaccharide Biosynthesis Protein SpsA, Chain A"/>
    <property type="match status" value="1"/>
</dbReference>
<dbReference type="InterPro" id="IPR001173">
    <property type="entry name" value="Glyco_trans_2-like"/>
</dbReference>
<dbReference type="InterPro" id="IPR029044">
    <property type="entry name" value="Nucleotide-diphossugar_trans"/>
</dbReference>
<dbReference type="PANTHER" id="PTHR43646">
    <property type="entry name" value="GLYCOSYLTRANSFERASE"/>
    <property type="match status" value="1"/>
</dbReference>
<dbReference type="PANTHER" id="PTHR43646:SF2">
    <property type="entry name" value="GLYCOSYLTRANSFERASE 2-LIKE DOMAIN-CONTAINING PROTEIN"/>
    <property type="match status" value="1"/>
</dbReference>
<dbReference type="Pfam" id="PF00535">
    <property type="entry name" value="Glycos_transf_2"/>
    <property type="match status" value="1"/>
</dbReference>
<dbReference type="SUPFAM" id="SSF53448">
    <property type="entry name" value="Nucleotide-diphospho-sugar transferases"/>
    <property type="match status" value="1"/>
</dbReference>
<keyword id="KW-1003">Cell membrane</keyword>
<keyword id="KW-0328">Glycosyltransferase</keyword>
<keyword id="KW-0472">Membrane</keyword>
<keyword id="KW-1185">Reference proteome</keyword>
<keyword id="KW-0808">Transferase</keyword>
<gene>
    <name type="primary">aglE</name>
    <name type="ordered locus">HVO_1523.1</name>
    <name type="ORF">HVO_1523A</name>
</gene>
<accession>D4GYG7</accession>
<accession>A8E1V5</accession>
<feature type="chain" id="PRO_0000415353" description="Glycosyltransferase AglE">
    <location>
        <begin position="1"/>
        <end position="304"/>
    </location>
</feature>
<organism>
    <name type="scientific">Haloferax volcanii (strain ATCC 29605 / DSM 3757 / JCM 8879 / NBRC 14742 / NCIMB 2012 / VKM B-1768 / DS2)</name>
    <name type="common">Halobacterium volcanii</name>
    <dbReference type="NCBI Taxonomy" id="309800"/>
    <lineage>
        <taxon>Archaea</taxon>
        <taxon>Methanobacteriati</taxon>
        <taxon>Methanobacteriota</taxon>
        <taxon>Stenosarchaea group</taxon>
        <taxon>Halobacteria</taxon>
        <taxon>Halobacteriales</taxon>
        <taxon>Haloferacaceae</taxon>
        <taxon>Haloferax</taxon>
    </lineage>
</organism>
<proteinExistence type="evidence at protein level"/>
<comment type="function">
    <text evidence="1 2 3">Involved in the assembly of a N-linked pentasaccharide that decorates the S-layer glycoprotein and flagellins. Catalyzes the addition to the dolichol phosphate carrier of the hexuronic acid found at position 4 of the pentasaccharide.</text>
</comment>
<comment type="pathway">
    <text evidence="1">Cell surface structure biogenesis; S-layer biogenesis.</text>
</comment>
<comment type="subcellular location">
    <subcellularLocation>
        <location evidence="1">Cell membrane</location>
    </subcellularLocation>
    <text>Could be an integral membrane protein.</text>
</comment>
<comment type="disruption phenotype">
    <text evidence="1 2 3">Mutants contain only mono-, di- and trisaccharide-modified phosphodolichols. Deletion does not alter cell growth or stability of the S-layer. Mutants exhibit defective or limited motility.</text>
</comment>
<comment type="similarity">
    <text evidence="4">Belongs to the glycosyltransferase 2 family.</text>
</comment>
<evidence type="ECO:0000269" key="1">
    <source>
    </source>
</evidence>
<evidence type="ECO:0000269" key="2">
    <source>
    </source>
</evidence>
<evidence type="ECO:0000269" key="3">
    <source>
    </source>
</evidence>
<evidence type="ECO:0000305" key="4"/>